<evidence type="ECO:0000255" key="1">
    <source>
        <dbReference type="HAMAP-Rule" id="MF_00020"/>
    </source>
</evidence>
<name>ACKA_THESQ</name>
<sequence length="403" mass="44941">MRVLVINSGSSSIKYQLIEMDGEKVLCKGIAERIGIEGSRLVHRVNDEKYVIERELPDHEEALKLILNTLVDEKLGVIKDLKEIDAVGHRVVHGGERFKESVLVDEEVLKAIEEVSPLAPLHNPANLMGIKAAMKLLPGVPNVVVFDTAFHQTIPQKAYLYAIPYEYYEKHRIRRYGFHGTSHRYVSKRAAEILGKKLEELKIITCHIGNGASVAAVKYGKCVDTSMGFTPLEGLVMGTRSGDLDPAIPFFIMEKEGISPQEMYDILNKKSGVYGLSKGFSSDMRDIEEAALKGDEWCKLILDIYHYRIAKYIGAYAAAMNGVDAIVFTAGVGENSPITREDVCSYLEFLGVKLDKQKNEETIRGKEGIISTLDSRVKVLVVPTNEELMIARDTKEIVEKIGR</sequence>
<accession>B1L9M9</accession>
<feature type="chain" id="PRO_1000090003" description="Acetate kinase">
    <location>
        <begin position="1"/>
        <end position="403"/>
    </location>
</feature>
<feature type="active site" description="Proton donor/acceptor" evidence="1">
    <location>
        <position position="147"/>
    </location>
</feature>
<feature type="binding site" evidence="1">
    <location>
        <position position="7"/>
    </location>
    <ligand>
        <name>Mg(2+)</name>
        <dbReference type="ChEBI" id="CHEBI:18420"/>
    </ligand>
</feature>
<feature type="binding site" evidence="1">
    <location>
        <position position="14"/>
    </location>
    <ligand>
        <name>ATP</name>
        <dbReference type="ChEBI" id="CHEBI:30616"/>
    </ligand>
</feature>
<feature type="binding site" evidence="1">
    <location>
        <position position="90"/>
    </location>
    <ligand>
        <name>substrate</name>
    </ligand>
</feature>
<feature type="binding site" evidence="1">
    <location>
        <begin position="207"/>
        <end position="211"/>
    </location>
    <ligand>
        <name>ATP</name>
        <dbReference type="ChEBI" id="CHEBI:30616"/>
    </ligand>
</feature>
<feature type="binding site" evidence="1">
    <location>
        <begin position="283"/>
        <end position="285"/>
    </location>
    <ligand>
        <name>ATP</name>
        <dbReference type="ChEBI" id="CHEBI:30616"/>
    </ligand>
</feature>
<feature type="binding site" evidence="1">
    <location>
        <begin position="331"/>
        <end position="335"/>
    </location>
    <ligand>
        <name>ATP</name>
        <dbReference type="ChEBI" id="CHEBI:30616"/>
    </ligand>
</feature>
<feature type="binding site" evidence="1">
    <location>
        <position position="386"/>
    </location>
    <ligand>
        <name>Mg(2+)</name>
        <dbReference type="ChEBI" id="CHEBI:18420"/>
    </ligand>
</feature>
<feature type="site" description="Transition state stabilizer" evidence="1">
    <location>
        <position position="179"/>
    </location>
</feature>
<feature type="site" description="Transition state stabilizer" evidence="1">
    <location>
        <position position="240"/>
    </location>
</feature>
<keyword id="KW-0067">ATP-binding</keyword>
<keyword id="KW-0963">Cytoplasm</keyword>
<keyword id="KW-0418">Kinase</keyword>
<keyword id="KW-0460">Magnesium</keyword>
<keyword id="KW-0479">Metal-binding</keyword>
<keyword id="KW-0547">Nucleotide-binding</keyword>
<keyword id="KW-0808">Transferase</keyword>
<comment type="function">
    <text evidence="1">Catalyzes the formation of acetyl phosphate from acetate and ATP. Can also catalyze the reverse reaction.</text>
</comment>
<comment type="catalytic activity">
    <reaction evidence="1">
        <text>acetate + ATP = acetyl phosphate + ADP</text>
        <dbReference type="Rhea" id="RHEA:11352"/>
        <dbReference type="ChEBI" id="CHEBI:22191"/>
        <dbReference type="ChEBI" id="CHEBI:30089"/>
        <dbReference type="ChEBI" id="CHEBI:30616"/>
        <dbReference type="ChEBI" id="CHEBI:456216"/>
        <dbReference type="EC" id="2.7.2.1"/>
    </reaction>
</comment>
<comment type="cofactor">
    <cofactor evidence="1">
        <name>Mg(2+)</name>
        <dbReference type="ChEBI" id="CHEBI:18420"/>
    </cofactor>
    <cofactor evidence="1">
        <name>Mn(2+)</name>
        <dbReference type="ChEBI" id="CHEBI:29035"/>
    </cofactor>
    <text evidence="1">Mg(2+). Can also accept Mn(2+).</text>
</comment>
<comment type="pathway">
    <text evidence="1">Metabolic intermediate biosynthesis; acetyl-CoA biosynthesis; acetyl-CoA from acetate: step 1/2.</text>
</comment>
<comment type="subunit">
    <text evidence="1">Homodimer.</text>
</comment>
<comment type="subcellular location">
    <subcellularLocation>
        <location evidence="1">Cytoplasm</location>
    </subcellularLocation>
</comment>
<comment type="similarity">
    <text evidence="1">Belongs to the acetokinase family.</text>
</comment>
<gene>
    <name evidence="1" type="primary">ackA</name>
    <name type="ordered locus">TRQ2_0674</name>
</gene>
<proteinExistence type="inferred from homology"/>
<organism>
    <name type="scientific">Thermotoga sp. (strain RQ2)</name>
    <dbReference type="NCBI Taxonomy" id="126740"/>
    <lineage>
        <taxon>Bacteria</taxon>
        <taxon>Thermotogati</taxon>
        <taxon>Thermotogota</taxon>
        <taxon>Thermotogae</taxon>
        <taxon>Thermotogales</taxon>
        <taxon>Thermotogaceae</taxon>
        <taxon>Thermotoga</taxon>
    </lineage>
</organism>
<dbReference type="EC" id="2.7.2.1" evidence="1"/>
<dbReference type="EMBL" id="CP000969">
    <property type="protein sequence ID" value="ACB09027.1"/>
    <property type="molecule type" value="Genomic_DNA"/>
</dbReference>
<dbReference type="RefSeq" id="WP_012310675.1">
    <property type="nucleotide sequence ID" value="NC_010483.1"/>
</dbReference>
<dbReference type="SMR" id="B1L9M9"/>
<dbReference type="KEGG" id="trq:TRQ2_0674"/>
<dbReference type="HOGENOM" id="CLU_020352_0_1_0"/>
<dbReference type="UniPathway" id="UPA00340">
    <property type="reaction ID" value="UER00458"/>
</dbReference>
<dbReference type="Proteomes" id="UP000001687">
    <property type="component" value="Chromosome"/>
</dbReference>
<dbReference type="GO" id="GO:0005737">
    <property type="term" value="C:cytoplasm"/>
    <property type="evidence" value="ECO:0007669"/>
    <property type="project" value="UniProtKB-SubCell"/>
</dbReference>
<dbReference type="GO" id="GO:0008776">
    <property type="term" value="F:acetate kinase activity"/>
    <property type="evidence" value="ECO:0007669"/>
    <property type="project" value="UniProtKB-UniRule"/>
</dbReference>
<dbReference type="GO" id="GO:0005524">
    <property type="term" value="F:ATP binding"/>
    <property type="evidence" value="ECO:0007669"/>
    <property type="project" value="UniProtKB-KW"/>
</dbReference>
<dbReference type="GO" id="GO:0000287">
    <property type="term" value="F:magnesium ion binding"/>
    <property type="evidence" value="ECO:0007669"/>
    <property type="project" value="UniProtKB-UniRule"/>
</dbReference>
<dbReference type="GO" id="GO:0006083">
    <property type="term" value="P:acetate metabolic process"/>
    <property type="evidence" value="ECO:0007669"/>
    <property type="project" value="TreeGrafter"/>
</dbReference>
<dbReference type="GO" id="GO:0006085">
    <property type="term" value="P:acetyl-CoA biosynthetic process"/>
    <property type="evidence" value="ECO:0007669"/>
    <property type="project" value="UniProtKB-UniRule"/>
</dbReference>
<dbReference type="CDD" id="cd24010">
    <property type="entry name" value="ASKHA_NBD_AcK_PK"/>
    <property type="match status" value="1"/>
</dbReference>
<dbReference type="Gene3D" id="3.30.420.40">
    <property type="match status" value="2"/>
</dbReference>
<dbReference type="HAMAP" id="MF_00020">
    <property type="entry name" value="Acetate_kinase"/>
    <property type="match status" value="1"/>
</dbReference>
<dbReference type="InterPro" id="IPR004372">
    <property type="entry name" value="Ac/propionate_kinase"/>
</dbReference>
<dbReference type="InterPro" id="IPR000890">
    <property type="entry name" value="Aliphatic_acid_kin_short-chain"/>
</dbReference>
<dbReference type="InterPro" id="IPR023865">
    <property type="entry name" value="Aliphatic_acid_kinase_CS"/>
</dbReference>
<dbReference type="InterPro" id="IPR043129">
    <property type="entry name" value="ATPase_NBD"/>
</dbReference>
<dbReference type="NCBIfam" id="TIGR00016">
    <property type="entry name" value="ackA"/>
    <property type="match status" value="1"/>
</dbReference>
<dbReference type="PANTHER" id="PTHR21060">
    <property type="entry name" value="ACETATE KINASE"/>
    <property type="match status" value="1"/>
</dbReference>
<dbReference type="PANTHER" id="PTHR21060:SF15">
    <property type="entry name" value="ACETATE KINASE-RELATED"/>
    <property type="match status" value="1"/>
</dbReference>
<dbReference type="Pfam" id="PF00871">
    <property type="entry name" value="Acetate_kinase"/>
    <property type="match status" value="1"/>
</dbReference>
<dbReference type="PIRSF" id="PIRSF000722">
    <property type="entry name" value="Acetate_prop_kin"/>
    <property type="match status" value="1"/>
</dbReference>
<dbReference type="PRINTS" id="PR00471">
    <property type="entry name" value="ACETATEKNASE"/>
</dbReference>
<dbReference type="SUPFAM" id="SSF53067">
    <property type="entry name" value="Actin-like ATPase domain"/>
    <property type="match status" value="2"/>
</dbReference>
<dbReference type="PROSITE" id="PS01075">
    <property type="entry name" value="ACETATE_KINASE_1"/>
    <property type="match status" value="1"/>
</dbReference>
<dbReference type="PROSITE" id="PS01076">
    <property type="entry name" value="ACETATE_KINASE_2"/>
    <property type="match status" value="1"/>
</dbReference>
<protein>
    <recommendedName>
        <fullName evidence="1">Acetate kinase</fullName>
        <ecNumber evidence="1">2.7.2.1</ecNumber>
    </recommendedName>
    <alternativeName>
        <fullName evidence="1">Acetokinase</fullName>
    </alternativeName>
</protein>
<reference key="1">
    <citation type="journal article" date="2011" name="J. Bacteriol.">
        <title>Genome sequence of Thermotoga sp. strain RQ2, a hyperthermophilic bacterium isolated from a geothermally heated region of the seafloor near Ribeira Quente, the Azores.</title>
        <authorList>
            <person name="Swithers K.S."/>
            <person name="DiPippo J.L."/>
            <person name="Bruce D.C."/>
            <person name="Detter C."/>
            <person name="Tapia R."/>
            <person name="Han S."/>
            <person name="Saunders E."/>
            <person name="Goodwin L.A."/>
            <person name="Han J."/>
            <person name="Woyke T."/>
            <person name="Pitluck S."/>
            <person name="Pennacchio L."/>
            <person name="Nolan M."/>
            <person name="Mikhailova N."/>
            <person name="Lykidis A."/>
            <person name="Land M.L."/>
            <person name="Brettin T."/>
            <person name="Stetter K.O."/>
            <person name="Nelson K.E."/>
            <person name="Gogarten J.P."/>
            <person name="Noll K.M."/>
        </authorList>
    </citation>
    <scope>NUCLEOTIDE SEQUENCE [LARGE SCALE GENOMIC DNA]</scope>
    <source>
        <strain>RQ2</strain>
    </source>
</reference>